<proteinExistence type="inferred from homology"/>
<dbReference type="EC" id="2.7.1.24" evidence="1"/>
<dbReference type="EMBL" id="AL591688">
    <property type="protein sequence ID" value="CAC41391.1"/>
    <property type="molecule type" value="Genomic_DNA"/>
</dbReference>
<dbReference type="RefSeq" id="NP_384110.1">
    <property type="nucleotide sequence ID" value="NC_003047.1"/>
</dbReference>
<dbReference type="RefSeq" id="WP_003531725.1">
    <property type="nucleotide sequence ID" value="NC_003047.1"/>
</dbReference>
<dbReference type="SMR" id="Q92TE9"/>
<dbReference type="EnsemblBacteria" id="CAC41391">
    <property type="protein sequence ID" value="CAC41391"/>
    <property type="gene ID" value="SMc02790"/>
</dbReference>
<dbReference type="GeneID" id="89574320"/>
<dbReference type="KEGG" id="sme:SMc02790"/>
<dbReference type="PATRIC" id="fig|266834.11.peg.1356"/>
<dbReference type="eggNOG" id="COG0237">
    <property type="taxonomic scope" value="Bacteria"/>
</dbReference>
<dbReference type="HOGENOM" id="CLU_057180_3_0_5"/>
<dbReference type="OrthoDB" id="9812943at2"/>
<dbReference type="UniPathway" id="UPA00241">
    <property type="reaction ID" value="UER00356"/>
</dbReference>
<dbReference type="Proteomes" id="UP000001976">
    <property type="component" value="Chromosome"/>
</dbReference>
<dbReference type="GO" id="GO:0005737">
    <property type="term" value="C:cytoplasm"/>
    <property type="evidence" value="ECO:0007669"/>
    <property type="project" value="UniProtKB-SubCell"/>
</dbReference>
<dbReference type="GO" id="GO:0005524">
    <property type="term" value="F:ATP binding"/>
    <property type="evidence" value="ECO:0007669"/>
    <property type="project" value="UniProtKB-UniRule"/>
</dbReference>
<dbReference type="GO" id="GO:0004140">
    <property type="term" value="F:dephospho-CoA kinase activity"/>
    <property type="evidence" value="ECO:0007669"/>
    <property type="project" value="UniProtKB-UniRule"/>
</dbReference>
<dbReference type="GO" id="GO:0015937">
    <property type="term" value="P:coenzyme A biosynthetic process"/>
    <property type="evidence" value="ECO:0007669"/>
    <property type="project" value="UniProtKB-UniRule"/>
</dbReference>
<dbReference type="CDD" id="cd02022">
    <property type="entry name" value="DPCK"/>
    <property type="match status" value="1"/>
</dbReference>
<dbReference type="Gene3D" id="3.40.50.300">
    <property type="entry name" value="P-loop containing nucleotide triphosphate hydrolases"/>
    <property type="match status" value="1"/>
</dbReference>
<dbReference type="HAMAP" id="MF_00376">
    <property type="entry name" value="Dephospho_CoA_kinase"/>
    <property type="match status" value="1"/>
</dbReference>
<dbReference type="InterPro" id="IPR001977">
    <property type="entry name" value="Depp_CoAkinase"/>
</dbReference>
<dbReference type="InterPro" id="IPR027417">
    <property type="entry name" value="P-loop_NTPase"/>
</dbReference>
<dbReference type="NCBIfam" id="TIGR00152">
    <property type="entry name" value="dephospho-CoA kinase"/>
    <property type="match status" value="1"/>
</dbReference>
<dbReference type="PANTHER" id="PTHR10695:SF46">
    <property type="entry name" value="BIFUNCTIONAL COENZYME A SYNTHASE-RELATED"/>
    <property type="match status" value="1"/>
</dbReference>
<dbReference type="PANTHER" id="PTHR10695">
    <property type="entry name" value="DEPHOSPHO-COA KINASE-RELATED"/>
    <property type="match status" value="1"/>
</dbReference>
<dbReference type="Pfam" id="PF01121">
    <property type="entry name" value="CoaE"/>
    <property type="match status" value="1"/>
</dbReference>
<dbReference type="SUPFAM" id="SSF52540">
    <property type="entry name" value="P-loop containing nucleoside triphosphate hydrolases"/>
    <property type="match status" value="1"/>
</dbReference>
<dbReference type="PROSITE" id="PS51219">
    <property type="entry name" value="DPCK"/>
    <property type="match status" value="1"/>
</dbReference>
<reference key="1">
    <citation type="journal article" date="2001" name="Proc. Natl. Acad. Sci. U.S.A.">
        <title>Analysis of the chromosome sequence of the legume symbiont Sinorhizobium meliloti strain 1021.</title>
        <authorList>
            <person name="Capela D."/>
            <person name="Barloy-Hubler F."/>
            <person name="Gouzy J."/>
            <person name="Bothe G."/>
            <person name="Ampe F."/>
            <person name="Batut J."/>
            <person name="Boistard P."/>
            <person name="Becker A."/>
            <person name="Boutry M."/>
            <person name="Cadieu E."/>
            <person name="Dreano S."/>
            <person name="Gloux S."/>
            <person name="Godrie T."/>
            <person name="Goffeau A."/>
            <person name="Kahn D."/>
            <person name="Kiss E."/>
            <person name="Lelaure V."/>
            <person name="Masuy D."/>
            <person name="Pohl T."/>
            <person name="Portetelle D."/>
            <person name="Puehler A."/>
            <person name="Purnelle B."/>
            <person name="Ramsperger U."/>
            <person name="Renard C."/>
            <person name="Thebault P."/>
            <person name="Vandenbol M."/>
            <person name="Weidner S."/>
            <person name="Galibert F."/>
        </authorList>
    </citation>
    <scope>NUCLEOTIDE SEQUENCE [LARGE SCALE GENOMIC DNA]</scope>
    <source>
        <strain>1021</strain>
    </source>
</reference>
<reference key="2">
    <citation type="journal article" date="2001" name="Science">
        <title>The composite genome of the legume symbiont Sinorhizobium meliloti.</title>
        <authorList>
            <person name="Galibert F."/>
            <person name="Finan T.M."/>
            <person name="Long S.R."/>
            <person name="Puehler A."/>
            <person name="Abola P."/>
            <person name="Ampe F."/>
            <person name="Barloy-Hubler F."/>
            <person name="Barnett M.J."/>
            <person name="Becker A."/>
            <person name="Boistard P."/>
            <person name="Bothe G."/>
            <person name="Boutry M."/>
            <person name="Bowser L."/>
            <person name="Buhrmester J."/>
            <person name="Cadieu E."/>
            <person name="Capela D."/>
            <person name="Chain P."/>
            <person name="Cowie A."/>
            <person name="Davis R.W."/>
            <person name="Dreano S."/>
            <person name="Federspiel N.A."/>
            <person name="Fisher R.F."/>
            <person name="Gloux S."/>
            <person name="Godrie T."/>
            <person name="Goffeau A."/>
            <person name="Golding B."/>
            <person name="Gouzy J."/>
            <person name="Gurjal M."/>
            <person name="Hernandez-Lucas I."/>
            <person name="Hong A."/>
            <person name="Huizar L."/>
            <person name="Hyman R.W."/>
            <person name="Jones T."/>
            <person name="Kahn D."/>
            <person name="Kahn M.L."/>
            <person name="Kalman S."/>
            <person name="Keating D.H."/>
            <person name="Kiss E."/>
            <person name="Komp C."/>
            <person name="Lelaure V."/>
            <person name="Masuy D."/>
            <person name="Palm C."/>
            <person name="Peck M.C."/>
            <person name="Pohl T.M."/>
            <person name="Portetelle D."/>
            <person name="Purnelle B."/>
            <person name="Ramsperger U."/>
            <person name="Surzycki R."/>
            <person name="Thebault P."/>
            <person name="Vandenbol M."/>
            <person name="Vorhoelter F.J."/>
            <person name="Weidner S."/>
            <person name="Wells D.H."/>
            <person name="Wong K."/>
            <person name="Yeh K.-C."/>
            <person name="Batut J."/>
        </authorList>
    </citation>
    <scope>NUCLEOTIDE SEQUENCE [LARGE SCALE GENOMIC DNA]</scope>
    <source>
        <strain>1021</strain>
    </source>
</reference>
<accession>Q92TE9</accession>
<evidence type="ECO:0000255" key="1">
    <source>
        <dbReference type="HAMAP-Rule" id="MF_00376"/>
    </source>
</evidence>
<sequence>MIIVGLTGSIGMGKSTAAGMFRELGVPVNDADEVVHMLYSGEAVAPVEAAFPGVAKGGVIDRAELSLRLVAAPERLAELERIVHPLVRAKEQEFVARHRADGAPFVLLDIPLLFETKAEARLDRIVVVTCDPEMQRERVMKRPGMTAEKFAMILKRQVPDSEKRARADYIVDTSDSFDVTRQQIRAIVDDLRAG</sequence>
<protein>
    <recommendedName>
        <fullName evidence="1">Dephospho-CoA kinase</fullName>
        <ecNumber evidence="1">2.7.1.24</ecNumber>
    </recommendedName>
    <alternativeName>
        <fullName evidence="1">Dephosphocoenzyme A kinase</fullName>
    </alternativeName>
</protein>
<comment type="function">
    <text evidence="1">Catalyzes the phosphorylation of the 3'-hydroxyl group of dephosphocoenzyme A to form coenzyme A.</text>
</comment>
<comment type="catalytic activity">
    <reaction evidence="1">
        <text>3'-dephospho-CoA + ATP = ADP + CoA + H(+)</text>
        <dbReference type="Rhea" id="RHEA:18245"/>
        <dbReference type="ChEBI" id="CHEBI:15378"/>
        <dbReference type="ChEBI" id="CHEBI:30616"/>
        <dbReference type="ChEBI" id="CHEBI:57287"/>
        <dbReference type="ChEBI" id="CHEBI:57328"/>
        <dbReference type="ChEBI" id="CHEBI:456216"/>
        <dbReference type="EC" id="2.7.1.24"/>
    </reaction>
</comment>
<comment type="pathway">
    <text evidence="1">Cofactor biosynthesis; coenzyme A biosynthesis; CoA from (R)-pantothenate: step 5/5.</text>
</comment>
<comment type="subcellular location">
    <subcellularLocation>
        <location evidence="1">Cytoplasm</location>
    </subcellularLocation>
</comment>
<comment type="similarity">
    <text evidence="1">Belongs to the CoaE family.</text>
</comment>
<feature type="chain" id="PRO_0000172988" description="Dephospho-CoA kinase">
    <location>
        <begin position="1"/>
        <end position="194"/>
    </location>
</feature>
<feature type="domain" description="DPCK" evidence="1">
    <location>
        <begin position="3"/>
        <end position="194"/>
    </location>
</feature>
<feature type="binding site" evidence="1">
    <location>
        <begin position="11"/>
        <end position="16"/>
    </location>
    <ligand>
        <name>ATP</name>
        <dbReference type="ChEBI" id="CHEBI:30616"/>
    </ligand>
</feature>
<name>COAE_RHIME</name>
<keyword id="KW-0067">ATP-binding</keyword>
<keyword id="KW-0173">Coenzyme A biosynthesis</keyword>
<keyword id="KW-0963">Cytoplasm</keyword>
<keyword id="KW-0418">Kinase</keyword>
<keyword id="KW-0547">Nucleotide-binding</keyword>
<keyword id="KW-1185">Reference proteome</keyword>
<keyword id="KW-0808">Transferase</keyword>
<gene>
    <name evidence="1" type="primary">coaE</name>
    <name type="ordered locus">R00004</name>
    <name type="ORF">SMc02790</name>
</gene>
<organism>
    <name type="scientific">Rhizobium meliloti (strain 1021)</name>
    <name type="common">Ensifer meliloti</name>
    <name type="synonym">Sinorhizobium meliloti</name>
    <dbReference type="NCBI Taxonomy" id="266834"/>
    <lineage>
        <taxon>Bacteria</taxon>
        <taxon>Pseudomonadati</taxon>
        <taxon>Pseudomonadota</taxon>
        <taxon>Alphaproteobacteria</taxon>
        <taxon>Hyphomicrobiales</taxon>
        <taxon>Rhizobiaceae</taxon>
        <taxon>Sinorhizobium/Ensifer group</taxon>
        <taxon>Sinorhizobium</taxon>
    </lineage>
</organism>